<dbReference type="EMBL" id="AY015343">
    <property type="protein sequence ID" value="AAK19830.1"/>
    <property type="molecule type" value="Genomic_DNA"/>
</dbReference>
<dbReference type="GO" id="GO:0009507">
    <property type="term" value="C:chloroplast"/>
    <property type="evidence" value="ECO:0007669"/>
    <property type="project" value="UniProtKB-SubCell"/>
</dbReference>
<dbReference type="GO" id="GO:0003723">
    <property type="term" value="F:RNA binding"/>
    <property type="evidence" value="ECO:0007669"/>
    <property type="project" value="UniProtKB-KW"/>
</dbReference>
<dbReference type="GO" id="GO:0006397">
    <property type="term" value="P:mRNA processing"/>
    <property type="evidence" value="ECO:0007669"/>
    <property type="project" value="UniProtKB-KW"/>
</dbReference>
<dbReference type="GO" id="GO:0008380">
    <property type="term" value="P:RNA splicing"/>
    <property type="evidence" value="ECO:0007669"/>
    <property type="project" value="UniProtKB-UniRule"/>
</dbReference>
<dbReference type="GO" id="GO:0008033">
    <property type="term" value="P:tRNA processing"/>
    <property type="evidence" value="ECO:0007669"/>
    <property type="project" value="UniProtKB-KW"/>
</dbReference>
<dbReference type="HAMAP" id="MF_01390">
    <property type="entry name" value="MatK"/>
    <property type="match status" value="1"/>
</dbReference>
<dbReference type="InterPro" id="IPR024937">
    <property type="entry name" value="Domain_X"/>
</dbReference>
<dbReference type="InterPro" id="IPR002866">
    <property type="entry name" value="Maturase_MatK"/>
</dbReference>
<dbReference type="InterPro" id="IPR024942">
    <property type="entry name" value="Maturase_MatK_N"/>
</dbReference>
<dbReference type="PANTHER" id="PTHR34811">
    <property type="entry name" value="MATURASE K"/>
    <property type="match status" value="1"/>
</dbReference>
<dbReference type="PANTHER" id="PTHR34811:SF1">
    <property type="entry name" value="MATURASE K"/>
    <property type="match status" value="1"/>
</dbReference>
<dbReference type="Pfam" id="PF01348">
    <property type="entry name" value="Intron_maturas2"/>
    <property type="match status" value="1"/>
</dbReference>
<dbReference type="Pfam" id="PF01824">
    <property type="entry name" value="MatK_N"/>
    <property type="match status" value="1"/>
</dbReference>
<keyword id="KW-0150">Chloroplast</keyword>
<keyword id="KW-0507">mRNA processing</keyword>
<keyword id="KW-0934">Plastid</keyword>
<keyword id="KW-0694">RNA-binding</keyword>
<keyword id="KW-0819">tRNA processing</keyword>
<reference key="1">
    <citation type="journal article" date="2002" name="Am. J. Bot.">
        <title>Phylogenetic relationships in the cactus family (Cactaceae) based on evidence from trnK/matK and trnL-trnF sequences.</title>
        <authorList>
            <person name="Nyffeler R."/>
        </authorList>
        <dbReference type="AGRICOLA" id="IND23311510"/>
    </citation>
    <scope>NUCLEOTIDE SEQUENCE [GENOMIC DNA]</scope>
    <source>
        <strain>SchtruE275</strain>
    </source>
</reference>
<protein>
    <recommendedName>
        <fullName evidence="1">Maturase K</fullName>
    </recommendedName>
    <alternativeName>
        <fullName evidence="1">Intron maturase</fullName>
    </alternativeName>
</protein>
<comment type="function">
    <text evidence="1">Usually encoded in the trnK tRNA gene intron. Probably assists in splicing its own and other chloroplast group II introns.</text>
</comment>
<comment type="subcellular location">
    <subcellularLocation>
        <location>Plastid</location>
        <location>Chloroplast</location>
    </subcellularLocation>
</comment>
<comment type="similarity">
    <text evidence="1">Belongs to the intron maturase 2 family. MatK subfamily.</text>
</comment>
<proteinExistence type="inferred from homology"/>
<accession>Q95E84</accession>
<gene>
    <name evidence="1" type="primary">matK</name>
</gene>
<feature type="chain" id="PRO_0000143703" description="Maturase K">
    <location>
        <begin position="1"/>
        <end position="509"/>
    </location>
</feature>
<sequence length="509" mass="60896">MEEFQRYIELDRSWQHNFVYPLIFQEYIYGFAYDHGLNKYILLENAGDKKYSLLIVKRLINRMYQQTHWILFANHSNQNDFFGHKHKKNLYYQIISEGFAVIVEIPFSPLLISSLEAKEKKIVKSHNLRSIHSIFPFFEDKFLHLNYVLEILIPYPIHLEILVQTLRYWVKDASSLHLLRFFLYEYRNWNSLITPQKSISIFSKRNQRLFLFLYNFHVCEYESIFVFLCNQSSHLRSTSFGALLERNYFYGKLEYLVKVFTFTKDFCVILWLLKDPFLHYVRYRGKSILASKGTPLLMHKWKYFLFNFWQCHFSLWSPPRRIYINRLSKHSLDFMGFFSSVRLNSSVVRSQMVENSFLIDNPIKKFDTIVRIIPLVGSLAKAKFCNVLGHPISKSVWTDLLDSDIMDRFGRICRNLSHYYSGSSRKKSLYRIKYILRLSCARTLARKHKSTVRAFLKRLGSEFLEEFFTEEEKVLSLILPRDSSISRGLYRGPFWYLDIICIHDLANDE</sequence>
<organism>
    <name type="scientific">Schlumbergera truncata</name>
    <name type="common">Thanksgiving cactus</name>
    <name type="synonym">Epiphyllum truncatum</name>
    <dbReference type="NCBI Taxonomy" id="3595"/>
    <lineage>
        <taxon>Eukaryota</taxon>
        <taxon>Viridiplantae</taxon>
        <taxon>Streptophyta</taxon>
        <taxon>Embryophyta</taxon>
        <taxon>Tracheophyta</taxon>
        <taxon>Spermatophyta</taxon>
        <taxon>Magnoliopsida</taxon>
        <taxon>eudicotyledons</taxon>
        <taxon>Gunneridae</taxon>
        <taxon>Pentapetalae</taxon>
        <taxon>Caryophyllales</taxon>
        <taxon>Cactineae</taxon>
        <taxon>Cactaceae</taxon>
        <taxon>Cactoideae</taxon>
        <taxon>Rhipsalideae</taxon>
        <taxon>Schlumbergera</taxon>
    </lineage>
</organism>
<geneLocation type="chloroplast"/>
<evidence type="ECO:0000255" key="1">
    <source>
        <dbReference type="HAMAP-Rule" id="MF_01390"/>
    </source>
</evidence>
<name>MATK_SCHTR</name>